<organism>
    <name type="scientific">Watsonia angusta</name>
    <dbReference type="NCBI Taxonomy" id="58981"/>
    <lineage>
        <taxon>Eukaryota</taxon>
        <taxon>Viridiplantae</taxon>
        <taxon>Streptophyta</taxon>
        <taxon>Embryophyta</taxon>
        <taxon>Tracheophyta</taxon>
        <taxon>Spermatophyta</taxon>
        <taxon>Magnoliopsida</taxon>
        <taxon>Liliopsida</taxon>
        <taxon>Asparagales</taxon>
        <taxon>Iridaceae</taxon>
        <taxon>Crocoideae</taxon>
        <taxon>Watsonieae</taxon>
        <taxon>Watsonia</taxon>
    </lineage>
</organism>
<protein>
    <recommendedName>
        <fullName evidence="1">Maturase K</fullName>
    </recommendedName>
    <alternativeName>
        <fullName evidence="1">Intron maturase</fullName>
    </alternativeName>
</protein>
<dbReference type="EMBL" id="AJ579991">
    <property type="protein sequence ID" value="CAE45261.1"/>
    <property type="molecule type" value="Genomic_DNA"/>
</dbReference>
<dbReference type="GO" id="GO:0009507">
    <property type="term" value="C:chloroplast"/>
    <property type="evidence" value="ECO:0007669"/>
    <property type="project" value="UniProtKB-SubCell"/>
</dbReference>
<dbReference type="GO" id="GO:0003723">
    <property type="term" value="F:RNA binding"/>
    <property type="evidence" value="ECO:0007669"/>
    <property type="project" value="UniProtKB-KW"/>
</dbReference>
<dbReference type="GO" id="GO:0006397">
    <property type="term" value="P:mRNA processing"/>
    <property type="evidence" value="ECO:0007669"/>
    <property type="project" value="UniProtKB-KW"/>
</dbReference>
<dbReference type="GO" id="GO:0008380">
    <property type="term" value="P:RNA splicing"/>
    <property type="evidence" value="ECO:0007669"/>
    <property type="project" value="UniProtKB-UniRule"/>
</dbReference>
<dbReference type="GO" id="GO:0008033">
    <property type="term" value="P:tRNA processing"/>
    <property type="evidence" value="ECO:0007669"/>
    <property type="project" value="UniProtKB-KW"/>
</dbReference>
<dbReference type="HAMAP" id="MF_01390">
    <property type="entry name" value="MatK"/>
    <property type="match status" value="1"/>
</dbReference>
<dbReference type="InterPro" id="IPR024937">
    <property type="entry name" value="Domain_X"/>
</dbReference>
<dbReference type="InterPro" id="IPR002866">
    <property type="entry name" value="Maturase_MatK"/>
</dbReference>
<dbReference type="InterPro" id="IPR024942">
    <property type="entry name" value="Maturase_MatK_N"/>
</dbReference>
<dbReference type="PANTHER" id="PTHR34811">
    <property type="entry name" value="MATURASE K"/>
    <property type="match status" value="1"/>
</dbReference>
<dbReference type="PANTHER" id="PTHR34811:SF1">
    <property type="entry name" value="MATURASE K"/>
    <property type="match status" value="1"/>
</dbReference>
<dbReference type="Pfam" id="PF01348">
    <property type="entry name" value="Intron_maturas2"/>
    <property type="match status" value="1"/>
</dbReference>
<dbReference type="Pfam" id="PF01824">
    <property type="entry name" value="MatK_N"/>
    <property type="match status" value="1"/>
</dbReference>
<reference key="1">
    <citation type="submission" date="2005-07" db="EMBL/GenBank/DDBJ databases">
        <title>Environmental energy and species richness in flowering plants.</title>
        <authorList>
            <person name="Davies T.J."/>
        </authorList>
    </citation>
    <scope>NUCLEOTIDE SEQUENCE [GENOMIC DNA]</scope>
</reference>
<gene>
    <name evidence="1" type="primary">matK</name>
</gene>
<name>MATK_WATAN</name>
<accession>Q4H174</accession>
<keyword id="KW-0150">Chloroplast</keyword>
<keyword id="KW-0507">mRNA processing</keyword>
<keyword id="KW-0934">Plastid</keyword>
<keyword id="KW-0694">RNA-binding</keyword>
<keyword id="KW-0819">tRNA processing</keyword>
<proteinExistence type="inferred from homology"/>
<sequence>MEELQGYFEKDRSRQQPFLYPLLFQEYIYALAHDRGLNRNGSIFYEPLEVFGYDSKSSLALVKRLITRIYQQHFFLSSVNDSNQNKFVGHHHTNFFYSRFYSQMISEGFTIIVEIPFSLQLVSYFKEKEIQKSHNLRSIHSIFPFLEDKLLHLNYVSDILIPHPIHMEILVQILQCWIQDVPLLHFLRFFLHEYNNWNSFFITQNKSIYLFSKETKRLFRFLYNSYVYECEFLFVFLRKHSSYLRFTSFRTFLERRYFYGKMEHLQTEHLIIVCCDXFNGTLWSFKDPFMHYARCQGKAILVSKGTHLLMKKWKYNFVNLWQYYFHFWYQSYRIHINQLSKHSFHFXGYFSSLLKNSSTVRNKMLDNSFLIDTLTTKFDTAVPVIFLIVSLSKAQFCTVSGHPISKPIWTDLSDSGIIERFGRICRNLSHYHSGSSKKQGLYRIKYILRLSCARTLAGKHKSTVRTFLQRLGSRLLEEFFTEGEQDLSLILPKAIPFPFQGSHRERIWYLDIIRINDLMNRL</sequence>
<geneLocation type="chloroplast"/>
<comment type="function">
    <text evidence="1">Usually encoded in the trnK tRNA gene intron. Probably assists in splicing its own and other chloroplast group II introns.</text>
</comment>
<comment type="subcellular location">
    <subcellularLocation>
        <location>Plastid</location>
        <location>Chloroplast</location>
    </subcellularLocation>
</comment>
<comment type="similarity">
    <text evidence="1">Belongs to the intron maturase 2 family. MatK subfamily.</text>
</comment>
<feature type="chain" id="PRO_0000143788" description="Maturase K">
    <location>
        <begin position="1"/>
        <end position="522"/>
    </location>
</feature>
<evidence type="ECO:0000255" key="1">
    <source>
        <dbReference type="HAMAP-Rule" id="MF_01390"/>
    </source>
</evidence>